<reference key="1">
    <citation type="journal article" date="2003" name="Genome Res.">
        <title>Comparative genome analysis of Vibrio vulnificus, a marine pathogen.</title>
        <authorList>
            <person name="Chen C.-Y."/>
            <person name="Wu K.-M."/>
            <person name="Chang Y.-C."/>
            <person name="Chang C.-H."/>
            <person name="Tsai H.-C."/>
            <person name="Liao T.-L."/>
            <person name="Liu Y.-M."/>
            <person name="Chen H.-J."/>
            <person name="Shen A.B.-T."/>
            <person name="Li J.-C."/>
            <person name="Su T.-L."/>
            <person name="Shao C.-P."/>
            <person name="Lee C.-T."/>
            <person name="Hor L.-I."/>
            <person name="Tsai S.-F."/>
        </authorList>
    </citation>
    <scope>NUCLEOTIDE SEQUENCE [LARGE SCALE GENOMIC DNA]</scope>
    <source>
        <strain>YJ016</strain>
    </source>
</reference>
<accession>Q7MQ88</accession>
<comment type="function">
    <text evidence="1">Removes the pyruvyl group from chorismate, with concomitant aromatization of the ring, to provide 4-hydroxybenzoate (4HB) for the ubiquinone pathway.</text>
</comment>
<comment type="catalytic activity">
    <reaction evidence="1">
        <text>chorismate = 4-hydroxybenzoate + pyruvate</text>
        <dbReference type="Rhea" id="RHEA:16505"/>
        <dbReference type="ChEBI" id="CHEBI:15361"/>
        <dbReference type="ChEBI" id="CHEBI:17879"/>
        <dbReference type="ChEBI" id="CHEBI:29748"/>
        <dbReference type="EC" id="4.1.3.40"/>
    </reaction>
</comment>
<comment type="pathway">
    <text evidence="1">Cofactor biosynthesis; ubiquinone biosynthesis.</text>
</comment>
<comment type="subcellular location">
    <subcellularLocation>
        <location evidence="1">Cytoplasm</location>
    </subcellularLocation>
</comment>
<comment type="similarity">
    <text evidence="1">Belongs to the UbiC family.</text>
</comment>
<comment type="sequence caution" evidence="2">
    <conflict type="erroneous initiation">
        <sequence resource="EMBL-CDS" id="BAC92884"/>
    </conflict>
    <text>Extended N-terminus.</text>
</comment>
<protein>
    <recommendedName>
        <fullName evidence="1">Probable chorismate pyruvate-lyase</fullName>
        <shortName evidence="1">CL</shortName>
        <shortName evidence="1">CPL</shortName>
        <ecNumber evidence="1">4.1.3.40</ecNumber>
    </recommendedName>
</protein>
<dbReference type="EC" id="4.1.3.40" evidence="1"/>
<dbReference type="EMBL" id="BA000037">
    <property type="protein sequence ID" value="BAC92884.1"/>
    <property type="status" value="ALT_INIT"/>
    <property type="molecule type" value="Genomic_DNA"/>
</dbReference>
<dbReference type="SMR" id="Q7MQ88"/>
<dbReference type="STRING" id="672.VV93_v1c01080"/>
<dbReference type="KEGG" id="vvy:VV0120"/>
<dbReference type="eggNOG" id="COG3161">
    <property type="taxonomic scope" value="Bacteria"/>
</dbReference>
<dbReference type="HOGENOM" id="CLU_096824_1_1_6"/>
<dbReference type="UniPathway" id="UPA00232"/>
<dbReference type="Proteomes" id="UP000002675">
    <property type="component" value="Chromosome I"/>
</dbReference>
<dbReference type="GO" id="GO:0005829">
    <property type="term" value="C:cytosol"/>
    <property type="evidence" value="ECO:0007669"/>
    <property type="project" value="TreeGrafter"/>
</dbReference>
<dbReference type="GO" id="GO:0008813">
    <property type="term" value="F:chorismate lyase activity"/>
    <property type="evidence" value="ECO:0007669"/>
    <property type="project" value="UniProtKB-UniRule"/>
</dbReference>
<dbReference type="GO" id="GO:0042866">
    <property type="term" value="P:pyruvate biosynthetic process"/>
    <property type="evidence" value="ECO:0007669"/>
    <property type="project" value="UniProtKB-UniRule"/>
</dbReference>
<dbReference type="GO" id="GO:0006744">
    <property type="term" value="P:ubiquinone biosynthetic process"/>
    <property type="evidence" value="ECO:0007669"/>
    <property type="project" value="UniProtKB-UniRule"/>
</dbReference>
<dbReference type="Gene3D" id="3.40.1410.10">
    <property type="entry name" value="Chorismate lyase-like"/>
    <property type="match status" value="1"/>
</dbReference>
<dbReference type="HAMAP" id="MF_01632">
    <property type="entry name" value="UbiC"/>
    <property type="match status" value="1"/>
</dbReference>
<dbReference type="InterPro" id="IPR007440">
    <property type="entry name" value="Chorismate--pyruvate_lyase"/>
</dbReference>
<dbReference type="InterPro" id="IPR028978">
    <property type="entry name" value="Chorismate_lyase_/UTRA_dom_sf"/>
</dbReference>
<dbReference type="PANTHER" id="PTHR38683">
    <property type="entry name" value="CHORISMATE PYRUVATE-LYASE"/>
    <property type="match status" value="1"/>
</dbReference>
<dbReference type="PANTHER" id="PTHR38683:SF1">
    <property type="entry name" value="CHORISMATE PYRUVATE-LYASE"/>
    <property type="match status" value="1"/>
</dbReference>
<dbReference type="Pfam" id="PF04345">
    <property type="entry name" value="Chor_lyase"/>
    <property type="match status" value="1"/>
</dbReference>
<dbReference type="SUPFAM" id="SSF64288">
    <property type="entry name" value="Chorismate lyase-like"/>
    <property type="match status" value="1"/>
</dbReference>
<feature type="chain" id="PRO_0000240584" description="Probable chorismate pyruvate-lyase">
    <location>
        <begin position="1"/>
        <end position="179"/>
    </location>
</feature>
<feature type="binding site" evidence="1">
    <location>
        <position position="82"/>
    </location>
    <ligand>
        <name>substrate</name>
    </ligand>
</feature>
<feature type="binding site" evidence="1">
    <location>
        <position position="120"/>
    </location>
    <ligand>
        <name>substrate</name>
    </ligand>
</feature>
<feature type="binding site" evidence="1">
    <location>
        <position position="165"/>
    </location>
    <ligand>
        <name>substrate</name>
    </ligand>
</feature>
<evidence type="ECO:0000255" key="1">
    <source>
        <dbReference type="HAMAP-Rule" id="MF_01632"/>
    </source>
</evidence>
<evidence type="ECO:0000305" key="2"/>
<gene>
    <name evidence="1" type="primary">ubiC</name>
    <name type="ordered locus">VV0120</name>
</gene>
<keyword id="KW-0963">Cytoplasm</keyword>
<keyword id="KW-0456">Lyase</keyword>
<keyword id="KW-0670">Pyruvate</keyword>
<keyword id="KW-0831">Ubiquinone biosynthesis</keyword>
<proteinExistence type="inferred from homology"/>
<name>UBIC_VIBVY</name>
<sequence>MNQPNSLYLALLIEAKWQNPEDFHFSSDFAKHWLLEQGSLSRRLARHCQHLTVELMRNEKSGVGQLTMQETQGLSPEICLIREVVLSGDQTPWVLGRTLIPETTLADQPYDLATLGDIPLGLTVFSAEQVERDALQVAWIETPQGRLLARRSRLWMNHKPMLVAELFLPDAPIYSRESV</sequence>
<organism>
    <name type="scientific">Vibrio vulnificus (strain YJ016)</name>
    <dbReference type="NCBI Taxonomy" id="196600"/>
    <lineage>
        <taxon>Bacteria</taxon>
        <taxon>Pseudomonadati</taxon>
        <taxon>Pseudomonadota</taxon>
        <taxon>Gammaproteobacteria</taxon>
        <taxon>Vibrionales</taxon>
        <taxon>Vibrionaceae</taxon>
        <taxon>Vibrio</taxon>
    </lineage>
</organism>